<evidence type="ECO:0000255" key="1">
    <source>
        <dbReference type="HAMAP-Rule" id="MF_02130"/>
    </source>
</evidence>
<evidence type="ECO:0000269" key="2">
    <source>
    </source>
</evidence>
<evidence type="ECO:0000269" key="3">
    <source>
    </source>
</evidence>
<evidence type="ECO:0000269" key="4">
    <source ref="4"/>
</evidence>
<evidence type="ECO:0000303" key="5">
    <source>
    </source>
</evidence>
<evidence type="ECO:0000303" key="6">
    <source>
    </source>
</evidence>
<evidence type="ECO:0000305" key="7">
    <source ref="4"/>
</evidence>
<evidence type="ECO:0007829" key="8">
    <source>
        <dbReference type="PDB" id="2OGF"/>
    </source>
</evidence>
<accession>Q57851</accession>
<reference key="1">
    <citation type="journal article" date="1996" name="Science">
        <title>Complete genome sequence of the methanogenic archaeon, Methanococcus jannaschii.</title>
        <authorList>
            <person name="Bult C.J."/>
            <person name="White O."/>
            <person name="Olsen G.J."/>
            <person name="Zhou L."/>
            <person name="Fleischmann R.D."/>
            <person name="Sutton G.G."/>
            <person name="Blake J.A."/>
            <person name="FitzGerald L.M."/>
            <person name="Clayton R.A."/>
            <person name="Gocayne J.D."/>
            <person name="Kerlavage A.R."/>
            <person name="Dougherty B.A."/>
            <person name="Tomb J.-F."/>
            <person name="Adams M.D."/>
            <person name="Reich C.I."/>
            <person name="Overbeek R."/>
            <person name="Kirkness E.F."/>
            <person name="Weinstock K.G."/>
            <person name="Merrick J.M."/>
            <person name="Glodek A."/>
            <person name="Scott J.L."/>
            <person name="Geoghagen N.S.M."/>
            <person name="Weidman J.F."/>
            <person name="Fuhrmann J.L."/>
            <person name="Nguyen D."/>
            <person name="Utterback T.R."/>
            <person name="Kelley J.M."/>
            <person name="Peterson J.D."/>
            <person name="Sadow P.W."/>
            <person name="Hanna M.C."/>
            <person name="Cotton M.D."/>
            <person name="Roberts K.M."/>
            <person name="Hurst M.A."/>
            <person name="Kaine B.P."/>
            <person name="Borodovsky M."/>
            <person name="Klenk H.-P."/>
            <person name="Fraser C.M."/>
            <person name="Smith H.O."/>
            <person name="Woese C.R."/>
            <person name="Venter J.C."/>
        </authorList>
    </citation>
    <scope>NUCLEOTIDE SEQUENCE [LARGE SCALE GENOMIC DNA]</scope>
    <source>
        <strain>ATCC 43067 / DSM 2661 / JAL-1 / JCM 10045 / NBRC 100440</strain>
    </source>
</reference>
<reference key="2">
    <citation type="journal article" date="2012" name="ACS Chem. Biol.">
        <title>Comparative genomics guided discovery of two missing archaeal enzyme families involved in the biosynthesis of the pterin moiety of tetrahydromethanopterin and tetrahydrofolate.</title>
        <authorList>
            <person name="Crecy-Lagard V.D."/>
            <person name="Phillips G."/>
            <person name="Grochowski L.L."/>
            <person name="Yacoubi B.E."/>
            <person name="Jenney F."/>
            <person name="Adams M.W."/>
            <person name="Murzin A.G."/>
            <person name="White R.H."/>
        </authorList>
    </citation>
    <scope>FUNCTION</scope>
    <scope>CATALYTIC ACTIVITY</scope>
    <scope>GENE NAME</scope>
    <scope>PATHWAY</scope>
</reference>
<reference key="3">
    <citation type="journal article" date="2014" name="J. Bacteriol.">
        <title>Biochemical characterization of a dihydroneopterin aldolase used for methanopterin biosynthesis in methanogens.</title>
        <authorList>
            <person name="Wang Y."/>
            <person name="Xu H."/>
            <person name="Grochowski L.L."/>
            <person name="White R.H."/>
        </authorList>
    </citation>
    <scope>CATALYTIC ACTIVITY</scope>
    <scope>BIOPHYSICOCHEMICAL PROPERTIES</scope>
    <scope>MUTAGENESIS OF GLU-25; HIS-35; GLN-61; TYR-78 AND TYR-111</scope>
</reference>
<reference key="4">
    <citation type="submission" date="2011-07" db="PDB data bank">
        <title>Crystal structure of hypothetical protein MJ0408 from Methanococcus jannaschii.</title>
        <authorList>
            <consortium name="New York structural genomix research consortium (NYSGXRC)"/>
        </authorList>
    </citation>
    <scope>X-RAY CRYSTALLOGRAPHY (1.89 ANGSTROMS) OF 2-121 IN COMPLEX WITH PTERIN ANALOG</scope>
    <scope>SUBUNIT</scope>
</reference>
<gene>
    <name evidence="1" type="primary">mptD</name>
    <name type="ordered locus">MJ0408</name>
</gene>
<organism>
    <name type="scientific">Methanocaldococcus jannaschii (strain ATCC 43067 / DSM 2661 / JAL-1 / JCM 10045 / NBRC 100440)</name>
    <name type="common">Methanococcus jannaschii</name>
    <dbReference type="NCBI Taxonomy" id="243232"/>
    <lineage>
        <taxon>Archaea</taxon>
        <taxon>Methanobacteriati</taxon>
        <taxon>Methanobacteriota</taxon>
        <taxon>Methanomada group</taxon>
        <taxon>Methanococci</taxon>
        <taxon>Methanococcales</taxon>
        <taxon>Methanocaldococcaceae</taxon>
        <taxon>Methanocaldococcus</taxon>
    </lineage>
</organism>
<proteinExistence type="evidence at protein level"/>
<keyword id="KW-0002">3D-structure</keyword>
<keyword id="KW-0456">Lyase</keyword>
<keyword id="KW-1185">Reference proteome</keyword>
<comment type="function">
    <text evidence="1 2">Catalyzes the conversion of 7,8-dihydroneopterin (H2Neo) to 6-hydroxymethyl-7,8-dihydropterin (6-HMD).</text>
</comment>
<comment type="catalytic activity">
    <reaction evidence="1 2 3">
        <text>7,8-dihydroneopterin = 6-hydroxymethyl-7,8-dihydropterin + glycolaldehyde</text>
        <dbReference type="Rhea" id="RHEA:10540"/>
        <dbReference type="ChEBI" id="CHEBI:17001"/>
        <dbReference type="ChEBI" id="CHEBI:17071"/>
        <dbReference type="ChEBI" id="CHEBI:44841"/>
        <dbReference type="EC" id="4.1.2.25"/>
    </reaction>
</comment>
<comment type="biophysicochemical properties">
    <kinetics>
        <KM evidence="3">64.5 uM for 7,8-dihydroneopterin (at 25 degrees Celsius)</KM>
        <KM evidence="3">9.9 uM for 7,8-dihydroneopterin (at 70 degrees Celsius)</KM>
        <text evidence="3">kcat is 0.07 sec(-1) at 25 degrees Celsius. kcat is 1.0 sec(-1) at 70 degrees Celsius.</text>
    </kinetics>
    <phDependence>
        <text evidence="3">Optimum pH is 8.3.</text>
    </phDependence>
</comment>
<comment type="pathway">
    <text evidence="1 2">Cofactor biosynthesis; 5,6,7,8-tetrahydromethanopterin biosynthesis.</text>
</comment>
<comment type="subunit">
    <text evidence="1 4">Homotetramer.</text>
</comment>
<comment type="similarity">
    <text evidence="1">Belongs to the archaeal dihydroneopterin aldolase family.</text>
</comment>
<feature type="chain" id="PRO_0000106857" description="Dihydroneopterin aldolase">
    <location>
        <begin position="1"/>
        <end position="121"/>
    </location>
</feature>
<feature type="binding site" evidence="7">
    <location>
        <position position="25"/>
    </location>
    <ligand>
        <name>substrate</name>
    </ligand>
</feature>
<feature type="binding site" evidence="7">
    <location>
        <position position="114"/>
    </location>
    <ligand>
        <name>substrate</name>
    </ligand>
</feature>
<feature type="mutagenesis site" description="Has 25-fold higher Km towards 7,8-dihydroneopterin than wild-type." evidence="3">
    <original>E</original>
    <variation>Q</variation>
    <location>
        <position position="25"/>
    </location>
</feature>
<feature type="mutagenesis site" description="Has 20-fold lower kcat than wild-type." evidence="3">
    <original>H</original>
    <variation>N</variation>
    <location>
        <position position="35"/>
    </location>
</feature>
<feature type="mutagenesis site" description="Has 20-fold lower kcat than wild-type." evidence="3">
    <original>Q</original>
    <variation>A</variation>
    <location>
        <position position="61"/>
    </location>
</feature>
<feature type="mutagenesis site" description="Has 20-fold lower kcat than wild-type." evidence="3">
    <original>Y</original>
    <variation>F</variation>
    <location>
        <position position="78"/>
    </location>
</feature>
<feature type="mutagenesis site" description="Has 2-fold lower kcat than wild-type." evidence="3">
    <original>Y</original>
    <variation>F</variation>
    <location>
        <position position="111"/>
    </location>
</feature>
<feature type="helix" evidence="8">
    <location>
        <begin position="3"/>
        <end position="5"/>
    </location>
</feature>
<feature type="helix" evidence="8">
    <location>
        <begin position="7"/>
        <end position="11"/>
    </location>
</feature>
<feature type="turn" evidence="8">
    <location>
        <begin position="12"/>
        <end position="15"/>
    </location>
</feature>
<feature type="helix" evidence="8">
    <location>
        <begin position="18"/>
        <end position="37"/>
    </location>
</feature>
<feature type="turn" evidence="8">
    <location>
        <begin position="44"/>
        <end position="46"/>
    </location>
</feature>
<feature type="helix" evidence="8">
    <location>
        <begin position="47"/>
        <end position="59"/>
    </location>
</feature>
<feature type="strand" evidence="8">
    <location>
        <begin position="64"/>
        <end position="71"/>
    </location>
</feature>
<feature type="helix" evidence="8">
    <location>
        <begin position="83"/>
        <end position="85"/>
    </location>
</feature>
<feature type="strand" evidence="8">
    <location>
        <begin position="86"/>
        <end position="94"/>
    </location>
</feature>
<feature type="strand" evidence="8">
    <location>
        <begin position="97"/>
        <end position="106"/>
    </location>
</feature>
<feature type="helix" evidence="8">
    <location>
        <begin position="107"/>
        <end position="109"/>
    </location>
</feature>
<feature type="strand" evidence="8">
    <location>
        <begin position="111"/>
        <end position="120"/>
    </location>
</feature>
<protein>
    <recommendedName>
        <fullName evidence="1 6">Dihydroneopterin aldolase</fullName>
        <shortName evidence="1 5">DHNA</shortName>
        <ecNumber evidence="1 2 3">4.1.2.25</ecNumber>
    </recommendedName>
    <alternativeName>
        <fullName evidence="1 5">7,8-dihydroneopterin aldolase</fullName>
    </alternativeName>
</protein>
<sequence>MRVEETEVFKKYFKNLTDRERAVFEGGITLGALFHQFVGTPVSKYNKESLERAIEEAMKNQPCVYDIKVKIRNVGEKYVSLDGKMLDVDLKIKINKTVAHLKLEYIPEIDYPLMYVKKFEE</sequence>
<name>MPTD_METJA</name>
<dbReference type="EC" id="4.1.2.25" evidence="1 2 3"/>
<dbReference type="EMBL" id="L77117">
    <property type="protein sequence ID" value="AAB98398.1"/>
    <property type="molecule type" value="Genomic_DNA"/>
</dbReference>
<dbReference type="PIR" id="H64350">
    <property type="entry name" value="H64350"/>
</dbReference>
<dbReference type="RefSeq" id="WP_010869907.1">
    <property type="nucleotide sequence ID" value="NC_000909.1"/>
</dbReference>
<dbReference type="PDB" id="2OGF">
    <property type="method" value="X-ray"/>
    <property type="resolution" value="1.89 A"/>
    <property type="chains" value="A/B/C/D=2-121"/>
</dbReference>
<dbReference type="PDBsum" id="2OGF"/>
<dbReference type="SMR" id="Q57851"/>
<dbReference type="FunCoup" id="Q57851">
    <property type="interactions" value="5"/>
</dbReference>
<dbReference type="STRING" id="243232.MJ_0408"/>
<dbReference type="PaxDb" id="243232-MJ_0408"/>
<dbReference type="EnsemblBacteria" id="AAB98398">
    <property type="protein sequence ID" value="AAB98398"/>
    <property type="gene ID" value="MJ_0408"/>
</dbReference>
<dbReference type="GeneID" id="1451268"/>
<dbReference type="KEGG" id="mja:MJ_0408"/>
<dbReference type="eggNOG" id="arCOG04705">
    <property type="taxonomic scope" value="Archaea"/>
</dbReference>
<dbReference type="HOGENOM" id="CLU_149105_1_0_2"/>
<dbReference type="InParanoid" id="Q57851"/>
<dbReference type="OrthoDB" id="132689at2157"/>
<dbReference type="PhylomeDB" id="Q57851"/>
<dbReference type="BioCyc" id="MetaCyc:MONOMER-17933"/>
<dbReference type="UniPathway" id="UPA00065"/>
<dbReference type="EvolutionaryTrace" id="Q57851"/>
<dbReference type="Proteomes" id="UP000000805">
    <property type="component" value="Chromosome"/>
</dbReference>
<dbReference type="GO" id="GO:0004150">
    <property type="term" value="F:dihydroneopterin aldolase activity"/>
    <property type="evidence" value="ECO:0007669"/>
    <property type="project" value="UniProtKB-UniRule"/>
</dbReference>
<dbReference type="GO" id="GO:2001118">
    <property type="term" value="P:tetrahydromethanopterin biosynthetic process"/>
    <property type="evidence" value="ECO:0007669"/>
    <property type="project" value="UniProtKB-UniRule"/>
</dbReference>
<dbReference type="Gene3D" id="3.30.1300.20">
    <property type="entry name" value="7,8-dihydroneopterin aldolase (MptD)"/>
    <property type="match status" value="1"/>
</dbReference>
<dbReference type="HAMAP" id="MF_02130">
    <property type="entry name" value="DHNA_arch"/>
    <property type="match status" value="1"/>
</dbReference>
<dbReference type="InterPro" id="IPR027508">
    <property type="entry name" value="DHN_aldolase_MptD"/>
</dbReference>
<dbReference type="InterPro" id="IPR036839">
    <property type="entry name" value="MptD_sf"/>
</dbReference>
<dbReference type="InterPro" id="IPR007181">
    <property type="entry name" value="MtpD_C"/>
</dbReference>
<dbReference type="Pfam" id="PF04038">
    <property type="entry name" value="DHNA"/>
    <property type="match status" value="1"/>
</dbReference>
<dbReference type="SUPFAM" id="SSF143560">
    <property type="entry name" value="MK0786-like"/>
    <property type="match status" value="1"/>
</dbReference>